<keyword id="KW-0687">Ribonucleoprotein</keyword>
<keyword id="KW-0689">Ribosomal protein</keyword>
<sequence length="60" mass="6865">MAVPARHTSKAKKNKRRTHYKLTAPSVQFDETTGDYSRSHRVSLKGYYKGRKIAKANEAK</sequence>
<organism>
    <name type="scientific">Streptococcus pyogenes serotype M4 (strain MGAS10750)</name>
    <dbReference type="NCBI Taxonomy" id="370554"/>
    <lineage>
        <taxon>Bacteria</taxon>
        <taxon>Bacillati</taxon>
        <taxon>Bacillota</taxon>
        <taxon>Bacilli</taxon>
        <taxon>Lactobacillales</taxon>
        <taxon>Streptococcaceae</taxon>
        <taxon>Streptococcus</taxon>
    </lineage>
</organism>
<dbReference type="EMBL" id="CP000262">
    <property type="protein sequence ID" value="ABF38882.1"/>
    <property type="molecule type" value="Genomic_DNA"/>
</dbReference>
<dbReference type="SMR" id="Q1J479"/>
<dbReference type="KEGG" id="spi:MGAS10750_Spy1932"/>
<dbReference type="HOGENOM" id="CLU_129084_2_3_9"/>
<dbReference type="Proteomes" id="UP000002434">
    <property type="component" value="Chromosome"/>
</dbReference>
<dbReference type="GO" id="GO:0015934">
    <property type="term" value="C:large ribosomal subunit"/>
    <property type="evidence" value="ECO:0007669"/>
    <property type="project" value="InterPro"/>
</dbReference>
<dbReference type="GO" id="GO:0003735">
    <property type="term" value="F:structural constituent of ribosome"/>
    <property type="evidence" value="ECO:0007669"/>
    <property type="project" value="InterPro"/>
</dbReference>
<dbReference type="GO" id="GO:0006412">
    <property type="term" value="P:translation"/>
    <property type="evidence" value="ECO:0007669"/>
    <property type="project" value="UniProtKB-UniRule"/>
</dbReference>
<dbReference type="HAMAP" id="MF_00340">
    <property type="entry name" value="Ribosomal_bL32"/>
    <property type="match status" value="1"/>
</dbReference>
<dbReference type="InterPro" id="IPR002677">
    <property type="entry name" value="Ribosomal_bL32"/>
</dbReference>
<dbReference type="InterPro" id="IPR044957">
    <property type="entry name" value="Ribosomal_bL32_bact"/>
</dbReference>
<dbReference type="InterPro" id="IPR011332">
    <property type="entry name" value="Ribosomal_zn-bd"/>
</dbReference>
<dbReference type="NCBIfam" id="TIGR01031">
    <property type="entry name" value="rpmF_bact"/>
    <property type="match status" value="1"/>
</dbReference>
<dbReference type="PANTHER" id="PTHR35534">
    <property type="entry name" value="50S RIBOSOMAL PROTEIN L32"/>
    <property type="match status" value="1"/>
</dbReference>
<dbReference type="PANTHER" id="PTHR35534:SF1">
    <property type="entry name" value="LARGE RIBOSOMAL SUBUNIT PROTEIN BL32"/>
    <property type="match status" value="1"/>
</dbReference>
<dbReference type="Pfam" id="PF01783">
    <property type="entry name" value="Ribosomal_L32p"/>
    <property type="match status" value="1"/>
</dbReference>
<dbReference type="SUPFAM" id="SSF57829">
    <property type="entry name" value="Zn-binding ribosomal proteins"/>
    <property type="match status" value="1"/>
</dbReference>
<gene>
    <name evidence="1" type="primary">rpmF</name>
    <name type="ordered locus">MGAS10750_Spy1932</name>
</gene>
<evidence type="ECO:0000255" key="1">
    <source>
        <dbReference type="HAMAP-Rule" id="MF_00340"/>
    </source>
</evidence>
<evidence type="ECO:0000256" key="2">
    <source>
        <dbReference type="SAM" id="MobiDB-lite"/>
    </source>
</evidence>
<evidence type="ECO:0000305" key="3"/>
<comment type="similarity">
    <text evidence="1">Belongs to the bacterial ribosomal protein bL32 family.</text>
</comment>
<name>RL32_STRPF</name>
<accession>Q1J479</accession>
<proteinExistence type="inferred from homology"/>
<protein>
    <recommendedName>
        <fullName evidence="1">Large ribosomal subunit protein bL32</fullName>
    </recommendedName>
    <alternativeName>
        <fullName evidence="3">50S ribosomal protein L32</fullName>
    </alternativeName>
</protein>
<feature type="chain" id="PRO_0000296577" description="Large ribosomal subunit protein bL32">
    <location>
        <begin position="1"/>
        <end position="60"/>
    </location>
</feature>
<feature type="region of interest" description="Disordered" evidence="2">
    <location>
        <begin position="1"/>
        <end position="22"/>
    </location>
</feature>
<feature type="compositionally biased region" description="Basic residues" evidence="2">
    <location>
        <begin position="7"/>
        <end position="20"/>
    </location>
</feature>
<reference key="1">
    <citation type="journal article" date="2006" name="Proc. Natl. Acad. Sci. U.S.A.">
        <title>Molecular genetic anatomy of inter- and intraserotype variation in the human bacterial pathogen group A Streptococcus.</title>
        <authorList>
            <person name="Beres S.B."/>
            <person name="Richter E.W."/>
            <person name="Nagiec M.J."/>
            <person name="Sumby P."/>
            <person name="Porcella S.F."/>
            <person name="DeLeo F.R."/>
            <person name="Musser J.M."/>
        </authorList>
    </citation>
    <scope>NUCLEOTIDE SEQUENCE [LARGE SCALE GENOMIC DNA]</scope>
    <source>
        <strain>MGAS10750</strain>
    </source>
</reference>